<dbReference type="SMR" id="C0HKZ7"/>
<dbReference type="GO" id="GO:0005576">
    <property type="term" value="C:extracellular region"/>
    <property type="evidence" value="ECO:0007669"/>
    <property type="project" value="UniProtKB-SubCell"/>
</dbReference>
<dbReference type="GO" id="GO:0090729">
    <property type="term" value="F:toxin activity"/>
    <property type="evidence" value="ECO:0007669"/>
    <property type="project" value="UniProtKB-KW"/>
</dbReference>
<dbReference type="FunFam" id="3.10.100.10:FF:000087">
    <property type="entry name" value="Snaclec rhodocetin subunit delta"/>
    <property type="match status" value="1"/>
</dbReference>
<dbReference type="Gene3D" id="3.10.100.10">
    <property type="entry name" value="Mannose-Binding Protein A, subunit A"/>
    <property type="match status" value="1"/>
</dbReference>
<dbReference type="InterPro" id="IPR001304">
    <property type="entry name" value="C-type_lectin-like"/>
</dbReference>
<dbReference type="InterPro" id="IPR016186">
    <property type="entry name" value="C-type_lectin-like/link_sf"/>
</dbReference>
<dbReference type="InterPro" id="IPR050111">
    <property type="entry name" value="C-type_lectin/snaclec_domain"/>
</dbReference>
<dbReference type="InterPro" id="IPR016187">
    <property type="entry name" value="CTDL_fold"/>
</dbReference>
<dbReference type="PANTHER" id="PTHR22803">
    <property type="entry name" value="MANNOSE, PHOSPHOLIPASE, LECTIN RECEPTOR RELATED"/>
    <property type="match status" value="1"/>
</dbReference>
<dbReference type="Pfam" id="PF00059">
    <property type="entry name" value="Lectin_C"/>
    <property type="match status" value="1"/>
</dbReference>
<dbReference type="SMART" id="SM00034">
    <property type="entry name" value="CLECT"/>
    <property type="match status" value="1"/>
</dbReference>
<dbReference type="SUPFAM" id="SSF56436">
    <property type="entry name" value="C-type lectin-like"/>
    <property type="match status" value="1"/>
</dbReference>
<dbReference type="PROSITE" id="PS50041">
    <property type="entry name" value="C_TYPE_LECTIN_2"/>
    <property type="match status" value="1"/>
</dbReference>
<feature type="chain" id="PRO_0000444295" description="Snaclec macrovipecetin subunit beta" evidence="3">
    <location>
        <begin position="1"/>
        <end position="127"/>
    </location>
</feature>
<feature type="domain" description="C-type lectin" evidence="2">
    <location>
        <begin position="11"/>
        <end position="122"/>
    </location>
</feature>
<feature type="disulfide bond" evidence="1">
    <location>
        <begin position="4"/>
        <end position="15"/>
    </location>
</feature>
<feature type="disulfide bond" evidence="2">
    <location>
        <begin position="32"/>
        <end position="121"/>
    </location>
</feature>
<feature type="disulfide bond" description="Interchain (with C-79 in subunit alpha)" evidence="1">
    <location>
        <position position="77"/>
    </location>
</feature>
<feature type="disulfide bond" evidence="2">
    <location>
        <begin position="98"/>
        <end position="113"/>
    </location>
</feature>
<proteinExistence type="evidence at protein level"/>
<protein>
    <recommendedName>
        <fullName evidence="4">Snaclec macrovipecetin subunit beta</fullName>
    </recommendedName>
</protein>
<evidence type="ECO:0000250" key="1">
    <source>
        <dbReference type="UniProtKB" id="Q8AYA3"/>
    </source>
</evidence>
<evidence type="ECO:0000255" key="2">
    <source>
        <dbReference type="PROSITE-ProRule" id="PRU00040"/>
    </source>
</evidence>
<evidence type="ECO:0000269" key="3">
    <source>
    </source>
</evidence>
<evidence type="ECO:0000303" key="4">
    <source>
    </source>
</evidence>
<evidence type="ECO:0000305" key="5"/>
<evidence type="ECO:0000305" key="6">
    <source>
    </source>
</evidence>
<name>SLMB_MACLB</name>
<accession>C0HKZ7</accession>
<keyword id="KW-0903">Direct protein sequencing</keyword>
<keyword id="KW-1015">Disulfide bond</keyword>
<keyword id="KW-1199">Hemostasis impairing toxin</keyword>
<keyword id="KW-0964">Secreted</keyword>
<keyword id="KW-0800">Toxin</keyword>
<reference evidence="5" key="1">
    <citation type="journal article" date="2018" name="Biochim. Biophys. Acta">
        <title>Macrovipecetin, a C-type lectin from Macrovipera lebetina venom, inhibits proliferation migration and invasion of SK-MEL-28 human melanoma cells and enhances their sensitivity to cisplatin.</title>
        <authorList>
            <person name="Hammouda M.B."/>
            <person name="Riahi-Chebbi I."/>
            <person name="Souid S."/>
            <person name="Othman H."/>
            <person name="Aloui Z."/>
            <person name="Srairi-Abid N."/>
            <person name="Karoui H."/>
            <person name="Gasmi A."/>
            <person name="Magnenat E.M."/>
            <person name="Wells T.N.C."/>
            <person name="Clemetson K.J."/>
            <person name="Rodriguez-Lopez J.N."/>
            <person name="Essafi-Benkhadir K."/>
        </authorList>
    </citation>
    <scope>PROTEIN SEQUENCE</scope>
    <scope>SUBUNIT</scope>
    <scope>SUBCELLULAR LOCATION</scope>
    <scope>MASS SPECTROMETRY</scope>
    <source>
        <tissue evidence="4">Venom</tissue>
    </source>
</reference>
<comment type="function">
    <text evidence="5">Interferes with one step of hemostasis (modulation of platelet aggregation, or coagulation cascade, for example).</text>
</comment>
<comment type="subunit">
    <text evidence="3">Heterodimer of subunits alpha and beta; disulfide-linked.</text>
</comment>
<comment type="subcellular location">
    <subcellularLocation>
        <location evidence="3">Secreted</location>
    </subcellularLocation>
</comment>
<comment type="tissue specificity">
    <text evidence="6">Expressed by the venom gland.</text>
</comment>
<comment type="mass spectrometry" mass="15031.7" method="Electrospray" evidence="3"/>
<comment type="similarity">
    <text evidence="5">Belongs to the snaclec family.</text>
</comment>
<organism evidence="4">
    <name type="scientific">Macrovipera lebetinus</name>
    <name type="common">Levantine viper</name>
    <name type="synonym">Vipera lebetina</name>
    <dbReference type="NCBI Taxonomy" id="3148341"/>
    <lineage>
        <taxon>Eukaryota</taxon>
        <taxon>Metazoa</taxon>
        <taxon>Chordata</taxon>
        <taxon>Craniata</taxon>
        <taxon>Vertebrata</taxon>
        <taxon>Euteleostomi</taxon>
        <taxon>Lepidosauria</taxon>
        <taxon>Squamata</taxon>
        <taxon>Bifurcata</taxon>
        <taxon>Unidentata</taxon>
        <taxon>Episquamata</taxon>
        <taxon>Toxicofera</taxon>
        <taxon>Serpentes</taxon>
        <taxon>Colubroidea</taxon>
        <taxon>Viperidae</taxon>
        <taxon>Viperinae</taxon>
        <taxon>Macrovipera</taxon>
    </lineage>
</organism>
<sequence length="127" mass="15026">DQDCLPGWSFYEGHCYKVFDVKKTWEDAEKFCTEQMSGGHLVSFHSSEEVDFMIKLASPILKFDLVWIGLSNFWRDCHWGWSDGVKLDYKAWSDKPNCYVAKTVDPQWLHRDCSRTYKFVCKSRVPR</sequence>